<dbReference type="EMBL" id="AC167242">
    <property type="status" value="NOT_ANNOTATED_CDS"/>
    <property type="molecule type" value="Genomic_DNA"/>
</dbReference>
<dbReference type="EMBL" id="BC042793">
    <property type="protein sequence ID" value="AAH42793.1"/>
    <property type="molecule type" value="mRNA"/>
</dbReference>
<dbReference type="EMBL" id="BC139284">
    <property type="protein sequence ID" value="AAI39285.1"/>
    <property type="status" value="ALT_SEQ"/>
    <property type="molecule type" value="mRNA"/>
</dbReference>
<dbReference type="EMBL" id="AK144522">
    <property type="protein sequence ID" value="BAE25923.1"/>
    <property type="status" value="ALT_SEQ"/>
    <property type="molecule type" value="mRNA"/>
</dbReference>
<dbReference type="CCDS" id="CCDS39959.2"/>
<dbReference type="RefSeq" id="NP_001028342.2">
    <property type="nucleotide sequence ID" value="NM_001033170.4"/>
</dbReference>
<dbReference type="SMR" id="Q80XS7"/>
<dbReference type="FunCoup" id="Q80XS7">
    <property type="interactions" value="1"/>
</dbReference>
<dbReference type="STRING" id="10090.ENSMUSP00000114397"/>
<dbReference type="PhosphoSitePlus" id="Q80XS7"/>
<dbReference type="PaxDb" id="10090-ENSMUSP00000114397"/>
<dbReference type="ProteomicsDB" id="275842"/>
<dbReference type="Antibodypedia" id="45772">
    <property type="antibodies" value="28 antibodies from 10 providers"/>
</dbReference>
<dbReference type="Ensembl" id="ENSMUST00000129507.5">
    <property type="protein sequence ID" value="ENSMUSP00000114397.3"/>
    <property type="gene ID" value="ENSMUSG00000054161.13"/>
</dbReference>
<dbReference type="GeneID" id="73813"/>
<dbReference type="KEGG" id="mmu:73813"/>
<dbReference type="UCSC" id="uc009gwx.1">
    <property type="organism name" value="mouse"/>
</dbReference>
<dbReference type="AGR" id="MGI:1921063"/>
<dbReference type="CTD" id="54854"/>
<dbReference type="MGI" id="MGI:1921063">
    <property type="gene designation" value="Fam83e"/>
</dbReference>
<dbReference type="VEuPathDB" id="HostDB:ENSMUSG00000054161"/>
<dbReference type="eggNOG" id="ENOG502QWTG">
    <property type="taxonomic scope" value="Eukaryota"/>
</dbReference>
<dbReference type="GeneTree" id="ENSGT00940000161572"/>
<dbReference type="HOGENOM" id="CLU_019056_4_0_1"/>
<dbReference type="InParanoid" id="Q80XS7"/>
<dbReference type="OMA" id="TYWPGRS"/>
<dbReference type="OrthoDB" id="8943940at2759"/>
<dbReference type="PhylomeDB" id="Q80XS7"/>
<dbReference type="TreeFam" id="TF330777"/>
<dbReference type="BioGRID-ORCS" id="73813">
    <property type="hits" value="2 hits in 77 CRISPR screens"/>
</dbReference>
<dbReference type="PRO" id="PR:Q80XS7"/>
<dbReference type="Proteomes" id="UP000000589">
    <property type="component" value="Chromosome 7"/>
</dbReference>
<dbReference type="RNAct" id="Q80XS7">
    <property type="molecule type" value="protein"/>
</dbReference>
<dbReference type="Bgee" id="ENSMUSG00000054161">
    <property type="expression patterns" value="Expressed in left colon and 46 other cell types or tissues"/>
</dbReference>
<dbReference type="GO" id="GO:0019901">
    <property type="term" value="F:protein kinase binding"/>
    <property type="evidence" value="ECO:0007669"/>
    <property type="project" value="Ensembl"/>
</dbReference>
<dbReference type="FunFam" id="3.30.870.10:FF:000004">
    <property type="entry name" value="protein FAM83H isoform X2"/>
    <property type="match status" value="1"/>
</dbReference>
<dbReference type="Gene3D" id="3.30.870.10">
    <property type="entry name" value="Endonuclease Chain A"/>
    <property type="match status" value="1"/>
</dbReference>
<dbReference type="InterPro" id="IPR050944">
    <property type="entry name" value="FAM83"/>
</dbReference>
<dbReference type="InterPro" id="IPR012461">
    <property type="entry name" value="SACK1"/>
</dbReference>
<dbReference type="PANTHER" id="PTHR16181">
    <property type="entry name" value="PROTEIN FAM83A-RELATED"/>
    <property type="match status" value="1"/>
</dbReference>
<dbReference type="PANTHER" id="PTHR16181:SF29">
    <property type="entry name" value="PROTEIN FAM83A-RELATED"/>
    <property type="match status" value="1"/>
</dbReference>
<dbReference type="Pfam" id="PF07894">
    <property type="entry name" value="SACK1"/>
    <property type="match status" value="1"/>
</dbReference>
<dbReference type="SUPFAM" id="SSF56024">
    <property type="entry name" value="Phospholipase D/nuclease"/>
    <property type="match status" value="1"/>
</dbReference>
<gene>
    <name evidence="4" type="primary">Fam83e</name>
</gene>
<evidence type="ECO:0000250" key="1">
    <source>
        <dbReference type="UniProtKB" id="Q2M2I3"/>
    </source>
</evidence>
<evidence type="ECO:0000256" key="2">
    <source>
        <dbReference type="SAM" id="MobiDB-lite"/>
    </source>
</evidence>
<evidence type="ECO:0000305" key="3"/>
<evidence type="ECO:0000312" key="4">
    <source>
        <dbReference type="MGI" id="MGI:1921063"/>
    </source>
</evidence>
<protein>
    <recommendedName>
        <fullName evidence="3">Protein FAM83E</fullName>
    </recommendedName>
</protein>
<accession>Q80XS7</accession>
<accession>B9EIA0</accession>
<accession>Q3UN25</accession>
<name>FA83E_MOUSE</name>
<organism>
    <name type="scientific">Mus musculus</name>
    <name type="common">Mouse</name>
    <dbReference type="NCBI Taxonomy" id="10090"/>
    <lineage>
        <taxon>Eukaryota</taxon>
        <taxon>Metazoa</taxon>
        <taxon>Chordata</taxon>
        <taxon>Craniata</taxon>
        <taxon>Vertebrata</taxon>
        <taxon>Euteleostomi</taxon>
        <taxon>Mammalia</taxon>
        <taxon>Eutheria</taxon>
        <taxon>Euarchontoglires</taxon>
        <taxon>Glires</taxon>
        <taxon>Rodentia</taxon>
        <taxon>Myomorpha</taxon>
        <taxon>Muroidea</taxon>
        <taxon>Muridae</taxon>
        <taxon>Murinae</taxon>
        <taxon>Mus</taxon>
        <taxon>Mus</taxon>
    </lineage>
</organism>
<comment type="function">
    <text evidence="1">May play a role in MAPK signaling.</text>
</comment>
<comment type="subunit">
    <text evidence="1">Directly interacts (via DUF1669) with CSNK1A1, CSNK1A1L, CSNK1D and CSNK1E (By similarity). May interact with RAF1 (By similarity).</text>
</comment>
<comment type="subcellular location">
    <subcellularLocation>
        <location evidence="1">Cytoplasm</location>
    </subcellularLocation>
    <subcellularLocation>
        <location evidence="1">Cytoplasm</location>
        <location evidence="1">Perinuclear region</location>
    </subcellularLocation>
</comment>
<comment type="domain">
    <text evidence="1">All members of the FAM83 family of proteins share a conserved N-terminal DUF1669 (domain of unknown function 1669) domain of about 300 amino acids. This domain mediates the interaction with casein kinase 1 (CK1) isoforms. Therefore, it has been proposed to rename DUF1669 the polypeptide anchor of CK1 domain.</text>
</comment>
<comment type="similarity">
    <text evidence="3">Belongs to the FAM83 family.</text>
</comment>
<comment type="sequence caution" evidence="3">
    <conflict type="miscellaneous discrepancy">
        <sequence resource="EMBL-CDS" id="AAI39285"/>
    </conflict>
    <text>Probable cloning artifact.</text>
</comment>
<comment type="sequence caution" evidence="3">
    <conflict type="miscellaneous discrepancy">
        <sequence resource="EMBL-CDS" id="BAE25923"/>
    </conflict>
    <text>Probable cloning artifact.</text>
</comment>
<sequence>MAASQLAALEGEELGAGEPALTKASPAVLYSEGQRLALEALLSSGEETFWACVQQERLPPFLSADEAQALATAAEDWLVPSQEPGAAGTGTAITDGDVGSLTYWPRQSEEPAPLLRLGWPEDTAWKGITRAQLYTQPPGEGQPPIKELVHQEIQAARKLVAVVMDVFTDPDLLRDMVDAATRRWIPVYLLLDHQHLPAFLALAQQLGVNLWTTENLDIRTVQGHTFQSRRRRQVSGHVREKFVLLDGDRVISGSYSFTWSDSRLHRSLVTLLTGEIADAFNQEFRVLYAASRPLSAAPARSPLFSPPEGPQLPRSPHRVALRCPVAPVAPLLSDGPLAQRLAACHILERDKQETPTTTGPALSDILRSVQRTRTTSGPPTRPSRSLWDLSRLSQLSGSSDGENESKKFWVSKDTPARALMRQRGTGGGPRAEMDSRSQPWGGPLPSIPARRLRYLSPAQRRLGDNATTSDWASGSGSGRRR</sequence>
<feature type="chain" id="PRO_0000314930" description="Protein FAM83E">
    <location>
        <begin position="1"/>
        <end position="481"/>
    </location>
</feature>
<feature type="region of interest" description="DUF1669" evidence="1">
    <location>
        <begin position="1"/>
        <end position="296"/>
    </location>
</feature>
<feature type="region of interest" description="Disordered" evidence="2">
    <location>
        <begin position="351"/>
        <end position="481"/>
    </location>
</feature>
<feature type="compositionally biased region" description="Low complexity" evidence="2">
    <location>
        <begin position="371"/>
        <end position="385"/>
    </location>
</feature>
<feature type="compositionally biased region" description="Polar residues" evidence="2">
    <location>
        <begin position="391"/>
        <end position="400"/>
    </location>
</feature>
<feature type="compositionally biased region" description="Polar residues" evidence="2">
    <location>
        <begin position="465"/>
        <end position="474"/>
    </location>
</feature>
<reference key="1">
    <citation type="journal article" date="2009" name="PLoS Biol.">
        <title>Lineage-specific biology revealed by a finished genome assembly of the mouse.</title>
        <authorList>
            <person name="Church D.M."/>
            <person name="Goodstadt L."/>
            <person name="Hillier L.W."/>
            <person name="Zody M.C."/>
            <person name="Goldstein S."/>
            <person name="She X."/>
            <person name="Bult C.J."/>
            <person name="Agarwala R."/>
            <person name="Cherry J.L."/>
            <person name="DiCuccio M."/>
            <person name="Hlavina W."/>
            <person name="Kapustin Y."/>
            <person name="Meric P."/>
            <person name="Maglott D."/>
            <person name="Birtle Z."/>
            <person name="Marques A.C."/>
            <person name="Graves T."/>
            <person name="Zhou S."/>
            <person name="Teague B."/>
            <person name="Potamousis K."/>
            <person name="Churas C."/>
            <person name="Place M."/>
            <person name="Herschleb J."/>
            <person name="Runnheim R."/>
            <person name="Forrest D."/>
            <person name="Amos-Landgraf J."/>
            <person name="Schwartz D.C."/>
            <person name="Cheng Z."/>
            <person name="Lindblad-Toh K."/>
            <person name="Eichler E.E."/>
            <person name="Ponting C.P."/>
        </authorList>
    </citation>
    <scope>NUCLEOTIDE SEQUENCE [LARGE SCALE GENOMIC DNA]</scope>
    <source>
        <strain>C57BL/6J</strain>
    </source>
</reference>
<reference key="2">
    <citation type="journal article" date="2004" name="Genome Res.">
        <title>The status, quality, and expansion of the NIH full-length cDNA project: the Mammalian Gene Collection (MGC).</title>
        <authorList>
            <consortium name="The MGC Project Team"/>
        </authorList>
    </citation>
    <scope>NUCLEOTIDE SEQUENCE [LARGE SCALE MRNA]</scope>
    <source>
        <strain>FVB/N</strain>
        <tissue>Brain</tissue>
        <tissue>Colon</tissue>
    </source>
</reference>
<reference key="3">
    <citation type="journal article" date="2005" name="Science">
        <title>The transcriptional landscape of the mammalian genome.</title>
        <authorList>
            <person name="Carninci P."/>
            <person name="Kasukawa T."/>
            <person name="Katayama S."/>
            <person name="Gough J."/>
            <person name="Frith M.C."/>
            <person name="Maeda N."/>
            <person name="Oyama R."/>
            <person name="Ravasi T."/>
            <person name="Lenhard B."/>
            <person name="Wells C."/>
            <person name="Kodzius R."/>
            <person name="Shimokawa K."/>
            <person name="Bajic V.B."/>
            <person name="Brenner S.E."/>
            <person name="Batalov S."/>
            <person name="Forrest A.R."/>
            <person name="Zavolan M."/>
            <person name="Davis M.J."/>
            <person name="Wilming L.G."/>
            <person name="Aidinis V."/>
            <person name="Allen J.E."/>
            <person name="Ambesi-Impiombato A."/>
            <person name="Apweiler R."/>
            <person name="Aturaliya R.N."/>
            <person name="Bailey T.L."/>
            <person name="Bansal M."/>
            <person name="Baxter L."/>
            <person name="Beisel K.W."/>
            <person name="Bersano T."/>
            <person name="Bono H."/>
            <person name="Chalk A.M."/>
            <person name="Chiu K.P."/>
            <person name="Choudhary V."/>
            <person name="Christoffels A."/>
            <person name="Clutterbuck D.R."/>
            <person name="Crowe M.L."/>
            <person name="Dalla E."/>
            <person name="Dalrymple B.P."/>
            <person name="de Bono B."/>
            <person name="Della Gatta G."/>
            <person name="di Bernardo D."/>
            <person name="Down T."/>
            <person name="Engstrom P."/>
            <person name="Fagiolini M."/>
            <person name="Faulkner G."/>
            <person name="Fletcher C.F."/>
            <person name="Fukushima T."/>
            <person name="Furuno M."/>
            <person name="Futaki S."/>
            <person name="Gariboldi M."/>
            <person name="Georgii-Hemming P."/>
            <person name="Gingeras T.R."/>
            <person name="Gojobori T."/>
            <person name="Green R.E."/>
            <person name="Gustincich S."/>
            <person name="Harbers M."/>
            <person name="Hayashi Y."/>
            <person name="Hensch T.K."/>
            <person name="Hirokawa N."/>
            <person name="Hill D."/>
            <person name="Huminiecki L."/>
            <person name="Iacono M."/>
            <person name="Ikeo K."/>
            <person name="Iwama A."/>
            <person name="Ishikawa T."/>
            <person name="Jakt M."/>
            <person name="Kanapin A."/>
            <person name="Katoh M."/>
            <person name="Kawasawa Y."/>
            <person name="Kelso J."/>
            <person name="Kitamura H."/>
            <person name="Kitano H."/>
            <person name="Kollias G."/>
            <person name="Krishnan S.P."/>
            <person name="Kruger A."/>
            <person name="Kummerfeld S.K."/>
            <person name="Kurochkin I.V."/>
            <person name="Lareau L.F."/>
            <person name="Lazarevic D."/>
            <person name="Lipovich L."/>
            <person name="Liu J."/>
            <person name="Liuni S."/>
            <person name="McWilliam S."/>
            <person name="Madan Babu M."/>
            <person name="Madera M."/>
            <person name="Marchionni L."/>
            <person name="Matsuda H."/>
            <person name="Matsuzawa S."/>
            <person name="Miki H."/>
            <person name="Mignone F."/>
            <person name="Miyake S."/>
            <person name="Morris K."/>
            <person name="Mottagui-Tabar S."/>
            <person name="Mulder N."/>
            <person name="Nakano N."/>
            <person name="Nakauchi H."/>
            <person name="Ng P."/>
            <person name="Nilsson R."/>
            <person name="Nishiguchi S."/>
            <person name="Nishikawa S."/>
            <person name="Nori F."/>
            <person name="Ohara O."/>
            <person name="Okazaki Y."/>
            <person name="Orlando V."/>
            <person name="Pang K.C."/>
            <person name="Pavan W.J."/>
            <person name="Pavesi G."/>
            <person name="Pesole G."/>
            <person name="Petrovsky N."/>
            <person name="Piazza S."/>
            <person name="Reed J."/>
            <person name="Reid J.F."/>
            <person name="Ring B.Z."/>
            <person name="Ringwald M."/>
            <person name="Rost B."/>
            <person name="Ruan Y."/>
            <person name="Salzberg S.L."/>
            <person name="Sandelin A."/>
            <person name="Schneider C."/>
            <person name="Schoenbach C."/>
            <person name="Sekiguchi K."/>
            <person name="Semple C.A."/>
            <person name="Seno S."/>
            <person name="Sessa L."/>
            <person name="Sheng Y."/>
            <person name="Shibata Y."/>
            <person name="Shimada H."/>
            <person name="Shimada K."/>
            <person name="Silva D."/>
            <person name="Sinclair B."/>
            <person name="Sperling S."/>
            <person name="Stupka E."/>
            <person name="Sugiura K."/>
            <person name="Sultana R."/>
            <person name="Takenaka Y."/>
            <person name="Taki K."/>
            <person name="Tammoja K."/>
            <person name="Tan S.L."/>
            <person name="Tang S."/>
            <person name="Taylor M.S."/>
            <person name="Tegner J."/>
            <person name="Teichmann S.A."/>
            <person name="Ueda H.R."/>
            <person name="van Nimwegen E."/>
            <person name="Verardo R."/>
            <person name="Wei C.L."/>
            <person name="Yagi K."/>
            <person name="Yamanishi H."/>
            <person name="Zabarovsky E."/>
            <person name="Zhu S."/>
            <person name="Zimmer A."/>
            <person name="Hide W."/>
            <person name="Bult C."/>
            <person name="Grimmond S.M."/>
            <person name="Teasdale R.D."/>
            <person name="Liu E.T."/>
            <person name="Brusic V."/>
            <person name="Quackenbush J."/>
            <person name="Wahlestedt C."/>
            <person name="Mattick J.S."/>
            <person name="Hume D.A."/>
            <person name="Kai C."/>
            <person name="Sasaki D."/>
            <person name="Tomaru Y."/>
            <person name="Fukuda S."/>
            <person name="Kanamori-Katayama M."/>
            <person name="Suzuki M."/>
            <person name="Aoki J."/>
            <person name="Arakawa T."/>
            <person name="Iida J."/>
            <person name="Imamura K."/>
            <person name="Itoh M."/>
            <person name="Kato T."/>
            <person name="Kawaji H."/>
            <person name="Kawagashira N."/>
            <person name="Kawashima T."/>
            <person name="Kojima M."/>
            <person name="Kondo S."/>
            <person name="Konno H."/>
            <person name="Nakano K."/>
            <person name="Ninomiya N."/>
            <person name="Nishio T."/>
            <person name="Okada M."/>
            <person name="Plessy C."/>
            <person name="Shibata K."/>
            <person name="Shiraki T."/>
            <person name="Suzuki S."/>
            <person name="Tagami M."/>
            <person name="Waki K."/>
            <person name="Watahiki A."/>
            <person name="Okamura-Oho Y."/>
            <person name="Suzuki H."/>
            <person name="Kawai J."/>
            <person name="Hayashizaki Y."/>
        </authorList>
    </citation>
    <scope>NUCLEOTIDE SEQUENCE [LARGE SCALE MRNA] OF 1-255</scope>
    <source>
        <strain>C57BL/6J</strain>
        <tissue>Gall bladder</tissue>
    </source>
</reference>
<proteinExistence type="evidence at transcript level"/>
<keyword id="KW-0963">Cytoplasm</keyword>
<keyword id="KW-1185">Reference proteome</keyword>